<organism>
    <name type="scientific">Quercus suber</name>
    <name type="common">Cork oak</name>
    <dbReference type="NCBI Taxonomy" id="58331"/>
    <lineage>
        <taxon>Eukaryota</taxon>
        <taxon>Viridiplantae</taxon>
        <taxon>Streptophyta</taxon>
        <taxon>Embryophyta</taxon>
        <taxon>Tracheophyta</taxon>
        <taxon>Spermatophyta</taxon>
        <taxon>Magnoliopsida</taxon>
        <taxon>eudicotyledons</taxon>
        <taxon>Gunneridae</taxon>
        <taxon>Pentapetalae</taxon>
        <taxon>rosids</taxon>
        <taxon>fabids</taxon>
        <taxon>Fagales</taxon>
        <taxon>Fagaceae</taxon>
        <taxon>Quercus</taxon>
    </lineage>
</organism>
<name>RL15_QUESU</name>
<proteinExistence type="evidence at transcript level"/>
<sequence length="201" mass="23135">MGAYKYVAEMERRKQSDVLRFLLRVRCWEYRQLNVIHRASRPSRPDKARRLGYKAKQGYVIYRVRVRRGNRKRPAPKGATFGKPVNQGINQLKFQRSLRSTAEERVARRCGGLRILNSYWITKTVSTSTLKSSLSTPSTRLSVVMPVSTGSATPYTSAENLAVSHPLGKQNRGLGRGSKHTKSPNHAFWKRTNKLFLRRYR</sequence>
<reference key="1">
    <citation type="submission" date="1997-08" db="EMBL/GenBank/DDBJ databases">
        <title>Ribosomal proteins in Quercus suber.</title>
        <authorList>
            <person name="Huguet G."/>
            <person name="Pla M."/>
            <person name="Verdaguer D."/>
            <person name="Molinas M."/>
        </authorList>
    </citation>
    <scope>NUCLEOTIDE SEQUENCE [MRNA]</scope>
</reference>
<evidence type="ECO:0000305" key="1"/>
<keyword id="KW-0687">Ribonucleoprotein</keyword>
<keyword id="KW-0689">Ribosomal protein</keyword>
<dbReference type="EMBL" id="AJ001346">
    <property type="protein sequence ID" value="CAA04690.1"/>
    <property type="molecule type" value="mRNA"/>
</dbReference>
<dbReference type="SMR" id="O82712"/>
<dbReference type="GO" id="GO:0022625">
    <property type="term" value="C:cytosolic large ribosomal subunit"/>
    <property type="evidence" value="ECO:0007669"/>
    <property type="project" value="TreeGrafter"/>
</dbReference>
<dbReference type="GO" id="GO:0003729">
    <property type="term" value="F:mRNA binding"/>
    <property type="evidence" value="ECO:0007669"/>
    <property type="project" value="UniProtKB-ARBA"/>
</dbReference>
<dbReference type="GO" id="GO:0003735">
    <property type="term" value="F:structural constituent of ribosome"/>
    <property type="evidence" value="ECO:0007669"/>
    <property type="project" value="InterPro"/>
</dbReference>
<dbReference type="GO" id="GO:0002181">
    <property type="term" value="P:cytoplasmic translation"/>
    <property type="evidence" value="ECO:0007669"/>
    <property type="project" value="TreeGrafter"/>
</dbReference>
<dbReference type="FunFam" id="3.40.1120.10:FF:000001">
    <property type="entry name" value="Ribosomal protein L15"/>
    <property type="match status" value="1"/>
</dbReference>
<dbReference type="Gene3D" id="3.40.1120.10">
    <property type="entry name" value="Ribosomal protein l15e"/>
    <property type="match status" value="1"/>
</dbReference>
<dbReference type="InterPro" id="IPR024794">
    <property type="entry name" value="Rbsml_eL15_core_dom_sf"/>
</dbReference>
<dbReference type="InterPro" id="IPR000439">
    <property type="entry name" value="Ribosomal_eL15"/>
</dbReference>
<dbReference type="InterPro" id="IPR020925">
    <property type="entry name" value="Ribosomal_eL15_CS"/>
</dbReference>
<dbReference type="InterPro" id="IPR012678">
    <property type="entry name" value="Ribosomal_uL23/eL15/eS24_sf"/>
</dbReference>
<dbReference type="PANTHER" id="PTHR11847:SF4">
    <property type="entry name" value="LARGE RIBOSOMAL SUBUNIT PROTEIN EL15"/>
    <property type="match status" value="1"/>
</dbReference>
<dbReference type="PANTHER" id="PTHR11847">
    <property type="entry name" value="RIBOSOMAL PROTEIN L15"/>
    <property type="match status" value="1"/>
</dbReference>
<dbReference type="Pfam" id="PF00827">
    <property type="entry name" value="Ribosomal_L15e"/>
    <property type="match status" value="1"/>
</dbReference>
<dbReference type="SMART" id="SM01384">
    <property type="entry name" value="Ribosomal_L15e"/>
    <property type="match status" value="1"/>
</dbReference>
<dbReference type="SUPFAM" id="SSF54189">
    <property type="entry name" value="Ribosomal proteins S24e, L23 and L15e"/>
    <property type="match status" value="1"/>
</dbReference>
<dbReference type="PROSITE" id="PS01194">
    <property type="entry name" value="RIBOSOMAL_L15E"/>
    <property type="match status" value="1"/>
</dbReference>
<protein>
    <recommendedName>
        <fullName evidence="1">Large ribosomal subunit protein eL15</fullName>
    </recommendedName>
    <alternativeName>
        <fullName>60S ribosomal protein L15</fullName>
    </alternativeName>
</protein>
<gene>
    <name type="primary">RPL15</name>
</gene>
<comment type="similarity">
    <text evidence="1">Belongs to the eukaryotic ribosomal protein eL15 family.</text>
</comment>
<accession>O82712</accession>
<feature type="chain" id="PRO_0000127561" description="Large ribosomal subunit protein eL15">
    <location>
        <begin position="1"/>
        <end position="201"/>
    </location>
</feature>